<feature type="signal peptide" evidence="1">
    <location>
        <begin position="1"/>
        <end position="26"/>
    </location>
</feature>
<feature type="chain" id="PRO_0000236046" description="Nuclear pore membrane glycoprotein 210">
    <location>
        <begin position="27"/>
        <end position="1887"/>
    </location>
</feature>
<feature type="topological domain" description="Perinuclear space" evidence="14">
    <location>
        <begin position="27"/>
        <end position="1808"/>
    </location>
</feature>
<feature type="transmembrane region" description="Helical" evidence="2">
    <location>
        <begin position="1809"/>
        <end position="1829"/>
    </location>
</feature>
<feature type="topological domain" description="Cytoplasmic" evidence="14">
    <location>
        <begin position="1830"/>
        <end position="1887"/>
    </location>
</feature>
<feature type="domain" description="BIG2" evidence="2">
    <location>
        <begin position="1078"/>
        <end position="1151"/>
    </location>
</feature>
<feature type="region of interest" description="Disordered" evidence="3">
    <location>
        <begin position="1853"/>
        <end position="1887"/>
    </location>
</feature>
<feature type="modified residue" description="Phosphothreonine" evidence="16 17 18 19 20">
    <location>
        <position position="1844"/>
    </location>
</feature>
<feature type="modified residue" description="Phosphoserine" evidence="15 16 17 19">
    <location>
        <position position="1874"/>
    </location>
</feature>
<feature type="modified residue" description="Phosphoserine" evidence="19">
    <location>
        <position position="1877"/>
    </location>
</feature>
<feature type="modified residue" description="Phosphoserine" evidence="15 16 17 19">
    <location>
        <position position="1881"/>
    </location>
</feature>
<feature type="modified residue" description="Phosphoserine" evidence="15">
    <location>
        <position position="1886"/>
    </location>
</feature>
<feature type="glycosylation site" description="N-linked (GlcNAc...) asparagine" evidence="2">
    <location>
        <position position="44"/>
    </location>
</feature>
<feature type="glycosylation site" description="N-linked (GlcNAc...) asparagine" evidence="2">
    <location>
        <position position="337"/>
    </location>
</feature>
<feature type="glycosylation site" description="N-linked (GlcNAc...) asparagine" evidence="10">
    <location>
        <position position="405"/>
    </location>
</feature>
<feature type="glycosylation site" description="N-linked (GlcNAc...) asparagine" evidence="2">
    <location>
        <position position="484"/>
    </location>
</feature>
<feature type="glycosylation site" description="N-linked (GlcNAc...) asparagine" evidence="2">
    <location>
        <position position="681"/>
    </location>
</feature>
<feature type="glycosylation site" description="N-linked (GlcNAc...) asparagine" evidence="2">
    <location>
        <position position="801"/>
    </location>
</feature>
<feature type="glycosylation site" description="N-linked (GlcNAc...) asparagine" evidence="10">
    <location>
        <position position="926"/>
    </location>
</feature>
<feature type="glycosylation site" description="N-linked (GlcNAc...) asparagine" evidence="2">
    <location>
        <position position="1039"/>
    </location>
</feature>
<feature type="glycosylation site" description="N-linked (GlcNAc...) asparagine" evidence="2">
    <location>
        <position position="1116"/>
    </location>
</feature>
<feature type="glycosylation site" description="N-linked (GlcNAc...) asparagine" evidence="2">
    <location>
        <position position="1135"/>
    </location>
</feature>
<feature type="glycosylation site" description="N-linked (GlcNAc...) asparagine" evidence="2">
    <location>
        <position position="1362"/>
    </location>
</feature>
<feature type="glycosylation site" description="N-linked (GlcNAc...) asparagine" evidence="10">
    <location>
        <position position="1441"/>
    </location>
</feature>
<feature type="splice variant" id="VSP_018567" description="In isoform 2." evidence="12 13">
    <original>HPLLPGSSTIMIHDLCLVFPA</original>
    <variation>SLGHRSPLLVFIPYLGCCVVN</variation>
    <location>
        <begin position="947"/>
        <end position="967"/>
    </location>
</feature>
<feature type="splice variant" id="VSP_018568" description="In isoform 2." evidence="12 13">
    <location>
        <begin position="968"/>
        <end position="1887"/>
    </location>
</feature>
<feature type="sequence variant" id="VAR_028147" description="In dbSNP:rs7628051.">
    <original>A</original>
    <variation>T</variation>
    <location>
        <position position="297"/>
    </location>
</feature>
<feature type="sequence variant" id="VAR_028148" description="In dbSNP:rs3732671.">
    <original>I</original>
    <variation>V</variation>
    <location>
        <position position="608"/>
    </location>
</feature>
<feature type="sequence variant" id="VAR_028149" description="In dbSNP:rs6795271.">
    <original>A</original>
    <variation>V</variation>
    <location>
        <position position="755"/>
    </location>
</feature>
<feature type="sequence variant" id="VAR_026474" description="Confirmed at protein level; dbSNP:rs2280084." evidence="6 8">
    <original>R</original>
    <variation>L</variation>
    <location>
        <position position="786"/>
    </location>
</feature>
<feature type="sequence variant" id="VAR_028150" description="In dbSNP:rs2280085.">
    <original>P</original>
    <variation>A</variation>
    <location>
        <position position="821"/>
    </location>
</feature>
<feature type="sequence variant" id="VAR_028151" description="In dbSNP:rs433032.">
    <original>A</original>
    <variation>P</variation>
    <location>
        <position position="944"/>
    </location>
</feature>
<feature type="sequence variant" id="VAR_028152" description="In dbSNP:rs2271505.">
    <original>M</original>
    <variation>I</variation>
    <location>
        <position position="1096"/>
    </location>
</feature>
<feature type="sequence variant" id="VAR_028153" description="In dbSNP:rs13081937.">
    <original>D</original>
    <variation>E</variation>
    <location>
        <position position="1430"/>
    </location>
</feature>
<feature type="sequence variant" id="VAR_026475" description="In dbSNP:rs354479." evidence="4 7 9">
    <original>L</original>
    <variation>S</variation>
    <location>
        <position position="1752"/>
    </location>
</feature>
<feature type="sequence variant" id="VAR_026476" description="In dbSNP:rs354478." evidence="4 7 9">
    <original>V</original>
    <variation>M</variation>
    <location>
        <position position="1787"/>
    </location>
</feature>
<feature type="sequence conflict" description="In Ref. 5; BAC11688." evidence="14" ref="5">
    <original>A</original>
    <variation>T</variation>
    <location>
        <position position="1512"/>
    </location>
</feature>
<feature type="sequence conflict" description="In Ref. 5; BAC11688." evidence="14" ref="5">
    <original>P</original>
    <variation>S</variation>
    <location>
        <position position="1761"/>
    </location>
</feature>
<protein>
    <recommendedName>
        <fullName>Nuclear pore membrane glycoprotein 210</fullName>
        <shortName>Nuclear pore protein gp210</shortName>
    </recommendedName>
    <alternativeName>
        <fullName>Nuclear envelope pore membrane protein POM 210</fullName>
        <shortName>POM210</shortName>
    </alternativeName>
    <alternativeName>
        <fullName>Nucleoporin Nup210</fullName>
    </alternativeName>
    <alternativeName>
        <fullName>Pore membrane protein of 210 kDa</fullName>
    </alternativeName>
</protein>
<keyword id="KW-0002">3D-structure</keyword>
<keyword id="KW-0025">Alternative splicing</keyword>
<keyword id="KW-0256">Endoplasmic reticulum</keyword>
<keyword id="KW-0325">Glycoprotein</keyword>
<keyword id="KW-0472">Membrane</keyword>
<keyword id="KW-0509">mRNA transport</keyword>
<keyword id="KW-0906">Nuclear pore complex</keyword>
<keyword id="KW-0539">Nucleus</keyword>
<keyword id="KW-0597">Phosphoprotein</keyword>
<keyword id="KW-0653">Protein transport</keyword>
<keyword id="KW-1267">Proteomics identification</keyword>
<keyword id="KW-1185">Reference proteome</keyword>
<keyword id="KW-0732">Signal</keyword>
<keyword id="KW-0811">Translocation</keyword>
<keyword id="KW-0812">Transmembrane</keyword>
<keyword id="KW-1133">Transmembrane helix</keyword>
<keyword id="KW-0813">Transport</keyword>
<accession>Q8TEM1</accession>
<accession>A6NN56</accession>
<accession>O94980</accession>
<accession>Q6NXG6</accession>
<accession>Q8NBJ1</accession>
<accession>Q9H6C8</accession>
<accession>Q9UFP3</accession>
<reference key="1">
    <citation type="journal article" date="2006" name="Nature">
        <title>The DNA sequence, annotation and analysis of human chromosome 3.</title>
        <authorList>
            <person name="Muzny D.M."/>
            <person name="Scherer S.E."/>
            <person name="Kaul R."/>
            <person name="Wang J."/>
            <person name="Yu J."/>
            <person name="Sudbrak R."/>
            <person name="Buhay C.J."/>
            <person name="Chen R."/>
            <person name="Cree A."/>
            <person name="Ding Y."/>
            <person name="Dugan-Rocha S."/>
            <person name="Gill R."/>
            <person name="Gunaratne P."/>
            <person name="Harris R.A."/>
            <person name="Hawes A.C."/>
            <person name="Hernandez J."/>
            <person name="Hodgson A.V."/>
            <person name="Hume J."/>
            <person name="Jackson A."/>
            <person name="Khan Z.M."/>
            <person name="Kovar-Smith C."/>
            <person name="Lewis L.R."/>
            <person name="Lozado R.J."/>
            <person name="Metzker M.L."/>
            <person name="Milosavljevic A."/>
            <person name="Miner G.R."/>
            <person name="Morgan M.B."/>
            <person name="Nazareth L.V."/>
            <person name="Scott G."/>
            <person name="Sodergren E."/>
            <person name="Song X.-Z."/>
            <person name="Steffen D."/>
            <person name="Wei S."/>
            <person name="Wheeler D.A."/>
            <person name="Wright M.W."/>
            <person name="Worley K.C."/>
            <person name="Yuan Y."/>
            <person name="Zhang Z."/>
            <person name="Adams C.Q."/>
            <person name="Ansari-Lari M.A."/>
            <person name="Ayele M."/>
            <person name="Brown M.J."/>
            <person name="Chen G."/>
            <person name="Chen Z."/>
            <person name="Clendenning J."/>
            <person name="Clerc-Blankenburg K.P."/>
            <person name="Chen R."/>
            <person name="Chen Z."/>
            <person name="Davis C."/>
            <person name="Delgado O."/>
            <person name="Dinh H.H."/>
            <person name="Dong W."/>
            <person name="Draper H."/>
            <person name="Ernst S."/>
            <person name="Fu G."/>
            <person name="Gonzalez-Garay M.L."/>
            <person name="Garcia D.K."/>
            <person name="Gillett W."/>
            <person name="Gu J."/>
            <person name="Hao B."/>
            <person name="Haugen E."/>
            <person name="Havlak P."/>
            <person name="He X."/>
            <person name="Hennig S."/>
            <person name="Hu S."/>
            <person name="Huang W."/>
            <person name="Jackson L.R."/>
            <person name="Jacob L.S."/>
            <person name="Kelly S.H."/>
            <person name="Kube M."/>
            <person name="Levy R."/>
            <person name="Li Z."/>
            <person name="Liu B."/>
            <person name="Liu J."/>
            <person name="Liu W."/>
            <person name="Lu J."/>
            <person name="Maheshwari M."/>
            <person name="Nguyen B.-V."/>
            <person name="Okwuonu G.O."/>
            <person name="Palmeiri A."/>
            <person name="Pasternak S."/>
            <person name="Perez L.M."/>
            <person name="Phelps K.A."/>
            <person name="Plopper F.J."/>
            <person name="Qiang B."/>
            <person name="Raymond C."/>
            <person name="Rodriguez R."/>
            <person name="Saenphimmachak C."/>
            <person name="Santibanez J."/>
            <person name="Shen H."/>
            <person name="Shen Y."/>
            <person name="Subramanian S."/>
            <person name="Tabor P.E."/>
            <person name="Verduzco D."/>
            <person name="Waldron L."/>
            <person name="Wang J."/>
            <person name="Wang J."/>
            <person name="Wang Q."/>
            <person name="Williams G.A."/>
            <person name="Wong G.K.-S."/>
            <person name="Yao Z."/>
            <person name="Zhang J."/>
            <person name="Zhang X."/>
            <person name="Zhao G."/>
            <person name="Zhou J."/>
            <person name="Zhou Y."/>
            <person name="Nelson D."/>
            <person name="Lehrach H."/>
            <person name="Reinhardt R."/>
            <person name="Naylor S.L."/>
            <person name="Yang H."/>
            <person name="Olson M."/>
            <person name="Weinstock G."/>
            <person name="Gibbs R.A."/>
        </authorList>
    </citation>
    <scope>NUCLEOTIDE SEQUENCE [LARGE SCALE GENOMIC DNA]</scope>
</reference>
<reference key="2">
    <citation type="journal article" date="2004" name="Genome Res.">
        <title>The status, quality, and expansion of the NIH full-length cDNA project: the Mammalian Gene Collection (MGC).</title>
        <authorList>
            <consortium name="The MGC Project Team"/>
        </authorList>
    </citation>
    <scope>NUCLEOTIDE SEQUENCE [LARGE SCALE MRNA] (ISOFORM 2)</scope>
    <source>
        <tissue>Spleen</tissue>
    </source>
</reference>
<reference key="3">
    <citation type="journal article" date="2004" name="Nat. Genet.">
        <title>Complete sequencing and characterization of 21,243 full-length human cDNAs.</title>
        <authorList>
            <person name="Ota T."/>
            <person name="Suzuki Y."/>
            <person name="Nishikawa T."/>
            <person name="Otsuki T."/>
            <person name="Sugiyama T."/>
            <person name="Irie R."/>
            <person name="Wakamatsu A."/>
            <person name="Hayashi K."/>
            <person name="Sato H."/>
            <person name="Nagai K."/>
            <person name="Kimura K."/>
            <person name="Makita H."/>
            <person name="Sekine M."/>
            <person name="Obayashi M."/>
            <person name="Nishi T."/>
            <person name="Shibahara T."/>
            <person name="Tanaka T."/>
            <person name="Ishii S."/>
            <person name="Yamamoto J."/>
            <person name="Saito K."/>
            <person name="Kawai Y."/>
            <person name="Isono Y."/>
            <person name="Nakamura Y."/>
            <person name="Nagahari K."/>
            <person name="Murakami K."/>
            <person name="Yasuda T."/>
            <person name="Iwayanagi T."/>
            <person name="Wagatsuma M."/>
            <person name="Shiratori A."/>
            <person name="Sudo H."/>
            <person name="Hosoiri T."/>
            <person name="Kaku Y."/>
            <person name="Kodaira H."/>
            <person name="Kondo H."/>
            <person name="Sugawara M."/>
            <person name="Takahashi M."/>
            <person name="Kanda K."/>
            <person name="Yokoi T."/>
            <person name="Furuya T."/>
            <person name="Kikkawa E."/>
            <person name="Omura Y."/>
            <person name="Abe K."/>
            <person name="Kamihara K."/>
            <person name="Katsuta N."/>
            <person name="Sato K."/>
            <person name="Tanikawa M."/>
            <person name="Yamazaki M."/>
            <person name="Ninomiya K."/>
            <person name="Ishibashi T."/>
            <person name="Yamashita H."/>
            <person name="Murakawa K."/>
            <person name="Fujimori K."/>
            <person name="Tanai H."/>
            <person name="Kimata M."/>
            <person name="Watanabe M."/>
            <person name="Hiraoka S."/>
            <person name="Chiba Y."/>
            <person name="Ishida S."/>
            <person name="Ono Y."/>
            <person name="Takiguchi S."/>
            <person name="Watanabe S."/>
            <person name="Yosida M."/>
            <person name="Hotuta T."/>
            <person name="Kusano J."/>
            <person name="Kanehori K."/>
            <person name="Takahashi-Fujii A."/>
            <person name="Hara H."/>
            <person name="Tanase T.-O."/>
            <person name="Nomura Y."/>
            <person name="Togiya S."/>
            <person name="Komai F."/>
            <person name="Hara R."/>
            <person name="Takeuchi K."/>
            <person name="Arita M."/>
            <person name="Imose N."/>
            <person name="Musashino K."/>
            <person name="Yuuki H."/>
            <person name="Oshima A."/>
            <person name="Sasaki N."/>
            <person name="Aotsuka S."/>
            <person name="Yoshikawa Y."/>
            <person name="Matsunawa H."/>
            <person name="Ichihara T."/>
            <person name="Shiohata N."/>
            <person name="Sano S."/>
            <person name="Moriya S."/>
            <person name="Momiyama H."/>
            <person name="Satoh N."/>
            <person name="Takami S."/>
            <person name="Terashima Y."/>
            <person name="Suzuki O."/>
            <person name="Nakagawa S."/>
            <person name="Senoh A."/>
            <person name="Mizoguchi H."/>
            <person name="Goto Y."/>
            <person name="Shimizu F."/>
            <person name="Wakebe H."/>
            <person name="Hishigaki H."/>
            <person name="Watanabe T."/>
            <person name="Sugiyama A."/>
            <person name="Takemoto M."/>
            <person name="Kawakami B."/>
            <person name="Yamazaki M."/>
            <person name="Watanabe K."/>
            <person name="Kumagai A."/>
            <person name="Itakura S."/>
            <person name="Fukuzumi Y."/>
            <person name="Fujimori Y."/>
            <person name="Komiyama M."/>
            <person name="Tashiro H."/>
            <person name="Tanigami A."/>
            <person name="Fujiwara T."/>
            <person name="Ono T."/>
            <person name="Yamada K."/>
            <person name="Fujii Y."/>
            <person name="Ozaki K."/>
            <person name="Hirao M."/>
            <person name="Ohmori Y."/>
            <person name="Kawabata A."/>
            <person name="Hikiji T."/>
            <person name="Kobatake N."/>
            <person name="Inagaki H."/>
            <person name="Ikema Y."/>
            <person name="Okamoto S."/>
            <person name="Okitani R."/>
            <person name="Kawakami T."/>
            <person name="Noguchi S."/>
            <person name="Itoh T."/>
            <person name="Shigeta K."/>
            <person name="Senba T."/>
            <person name="Matsumura K."/>
            <person name="Nakajima Y."/>
            <person name="Mizuno T."/>
            <person name="Morinaga M."/>
            <person name="Sasaki M."/>
            <person name="Togashi T."/>
            <person name="Oyama M."/>
            <person name="Hata H."/>
            <person name="Watanabe M."/>
            <person name="Komatsu T."/>
            <person name="Mizushima-Sugano J."/>
            <person name="Satoh T."/>
            <person name="Shirai Y."/>
            <person name="Takahashi Y."/>
            <person name="Nakagawa K."/>
            <person name="Okumura K."/>
            <person name="Nagase T."/>
            <person name="Nomura N."/>
            <person name="Kikuchi H."/>
            <person name="Masuho Y."/>
            <person name="Yamashita R."/>
            <person name="Nakai K."/>
            <person name="Yada T."/>
            <person name="Nakamura Y."/>
            <person name="Ohara O."/>
            <person name="Isogai T."/>
            <person name="Sugano S."/>
        </authorList>
    </citation>
    <scope>NUCLEOTIDE SEQUENCE [LARGE SCALE MRNA] OF 763-1887 (ISOFORM 1)</scope>
    <scope>NUCLEOTIDE SEQUENCE [LARGE SCALE MRNA] OF 412-1887 (ISOFORM 2)</scope>
    <scope>VARIANT LEU-786</scope>
    <source>
        <tissue>Brain</tissue>
        <tissue>Spleen</tissue>
    </source>
</reference>
<reference key="4">
    <citation type="journal article" date="1998" name="DNA Res.">
        <title>Prediction of the coding sequences of unidentified human genes. XII. The complete sequences of 100 new cDNA clones from brain which code for large proteins in vitro.</title>
        <authorList>
            <person name="Nagase T."/>
            <person name="Ishikawa K."/>
            <person name="Suyama M."/>
            <person name="Kikuno R."/>
            <person name="Hirosawa M."/>
            <person name="Miyajima N."/>
            <person name="Tanaka A."/>
            <person name="Kotani H."/>
            <person name="Nomura N."/>
            <person name="Ohara O."/>
        </authorList>
    </citation>
    <scope>NUCLEOTIDE SEQUENCE [LARGE SCALE MRNA] OF 965-1887 (ISOFORM 1)</scope>
    <scope>VARIANTS SER-1752 AND MET-1787</scope>
    <scope>TISSUE SPECIFICITY</scope>
    <source>
        <tissue>Brain</tissue>
    </source>
</reference>
<reference key="5">
    <citation type="journal article" date="2005" name="DNA Res.">
        <title>Signal sequence and keyword trap in silico for selection of full-length human cDNAs encoding secretion or membrane proteins from oligo-capped cDNA libraries.</title>
        <authorList>
            <person name="Otsuki T."/>
            <person name="Ota T."/>
            <person name="Nishikawa T."/>
            <person name="Hayashi K."/>
            <person name="Suzuki Y."/>
            <person name="Yamamoto J."/>
            <person name="Wakamatsu A."/>
            <person name="Kimura K."/>
            <person name="Sakamoto K."/>
            <person name="Hatano N."/>
            <person name="Kawai Y."/>
            <person name="Ishii S."/>
            <person name="Saito K."/>
            <person name="Kojima S."/>
            <person name="Sugiyama T."/>
            <person name="Ono T."/>
            <person name="Okano K."/>
            <person name="Yoshikawa Y."/>
            <person name="Aotsuka S."/>
            <person name="Sasaki N."/>
            <person name="Hattori A."/>
            <person name="Okumura K."/>
            <person name="Nagai K."/>
            <person name="Sugano S."/>
            <person name="Isogai T."/>
        </authorList>
    </citation>
    <scope>NUCLEOTIDE SEQUENCE [LARGE SCALE MRNA] OF 1405-1887 (ISOFORM 1)</scope>
    <scope>VARIANTS SER-1752 AND MET-1787</scope>
    <source>
        <tissue>Ovary tumor</tissue>
    </source>
</reference>
<reference key="6">
    <citation type="journal article" date="2007" name="BMC Genomics">
        <title>The full-ORF clone resource of the German cDNA consortium.</title>
        <authorList>
            <person name="Bechtel S."/>
            <person name="Rosenfelder H."/>
            <person name="Duda A."/>
            <person name="Schmidt C.P."/>
            <person name="Ernst U."/>
            <person name="Wellenreuther R."/>
            <person name="Mehrle A."/>
            <person name="Schuster C."/>
            <person name="Bahr A."/>
            <person name="Bloecker H."/>
            <person name="Heubner D."/>
            <person name="Hoerlein A."/>
            <person name="Michel G."/>
            <person name="Wedler H."/>
            <person name="Koehrer K."/>
            <person name="Ottenwaelder B."/>
            <person name="Poustka A."/>
            <person name="Wiemann S."/>
            <person name="Schupp I."/>
        </authorList>
    </citation>
    <scope>NUCLEOTIDE SEQUENCE [LARGE SCALE MRNA] OF 1460-1887 (ISOFORM 1)</scope>
    <scope>VARIANTS SER-1752 AND MET-1787</scope>
    <source>
        <tissue>Testis</tissue>
    </source>
</reference>
<reference key="7">
    <citation type="journal article" date="1990" name="J. Clin. Invest.">
        <title>The 210-kD nuclear envelope polypeptide recognized by human autoantibodies in primary biliary cirrhosis is the major glycoprotein of the nuclear pore.</title>
        <authorList>
            <person name="Courvalin J.-C."/>
            <person name="Lassoued K."/>
            <person name="Bartnik E."/>
            <person name="Blobel G."/>
            <person name="Wozniak R.W."/>
        </authorList>
    </citation>
    <scope>SUBCELLULAR LOCATION</scope>
    <source>
        <tissue>Cervix carcinoma</tissue>
    </source>
</reference>
<reference key="8">
    <citation type="journal article" date="2003" name="Mol. Biol. Cell">
        <title>Nuclear pore protein gp210 is essential for viability in HeLa cells and Caenorhabditis elegans.</title>
        <authorList>
            <person name="Cohen M."/>
            <person name="Feinstein N."/>
            <person name="Wilson K.L."/>
            <person name="Gruenbaum Y."/>
        </authorList>
    </citation>
    <scope>FUNCTION</scope>
    <source>
        <tissue>Cervix carcinoma</tissue>
    </source>
</reference>
<reference key="9">
    <citation type="journal article" date="2008" name="Proc. Natl. Acad. Sci. U.S.A.">
        <title>A quantitative atlas of mitotic phosphorylation.</title>
        <authorList>
            <person name="Dephoure N."/>
            <person name="Zhou C."/>
            <person name="Villen J."/>
            <person name="Beausoleil S.A."/>
            <person name="Bakalarski C.E."/>
            <person name="Elledge S.J."/>
            <person name="Gygi S.P."/>
        </authorList>
    </citation>
    <scope>PHOSPHORYLATION [LARGE SCALE ANALYSIS] AT SER-1874; SER-1881 AND SER-1886</scope>
    <scope>IDENTIFICATION BY MASS SPECTROMETRY [LARGE SCALE ANALYSIS]</scope>
    <source>
        <tissue>Cervix carcinoma</tissue>
    </source>
</reference>
<reference key="10">
    <citation type="journal article" date="2009" name="J. Proteome Res.">
        <title>Glycoproteomics analysis of human liver tissue by combination of multiple enzyme digestion and hydrazide chemistry.</title>
        <authorList>
            <person name="Chen R."/>
            <person name="Jiang X."/>
            <person name="Sun D."/>
            <person name="Han G."/>
            <person name="Wang F."/>
            <person name="Ye M."/>
            <person name="Wang L."/>
            <person name="Zou H."/>
        </authorList>
    </citation>
    <scope>GLYCOSYLATION [LARGE SCALE ANALYSIS] AT ASN-405; ASN-926 AND ASN-1441</scope>
    <source>
        <tissue>Liver</tissue>
    </source>
</reference>
<reference key="11">
    <citation type="journal article" date="2009" name="Sci. Signal.">
        <title>Quantitative phosphoproteomic analysis of T cell receptor signaling reveals system-wide modulation of protein-protein interactions.</title>
        <authorList>
            <person name="Mayya V."/>
            <person name="Lundgren D.H."/>
            <person name="Hwang S.-I."/>
            <person name="Rezaul K."/>
            <person name="Wu L."/>
            <person name="Eng J.K."/>
            <person name="Rodionov V."/>
            <person name="Han D.K."/>
        </authorList>
    </citation>
    <scope>PHOSPHORYLATION [LARGE SCALE ANALYSIS] AT THR-1844; SER-1874 AND SER-1881</scope>
    <scope>IDENTIFICATION BY MASS SPECTROMETRY [LARGE SCALE ANALYSIS]</scope>
    <source>
        <tissue>Leukemic T-cell</tissue>
    </source>
</reference>
<reference key="12">
    <citation type="journal article" date="2010" name="Sci. Signal.">
        <title>Quantitative phosphoproteomics reveals widespread full phosphorylation site occupancy during mitosis.</title>
        <authorList>
            <person name="Olsen J.V."/>
            <person name="Vermeulen M."/>
            <person name="Santamaria A."/>
            <person name="Kumar C."/>
            <person name="Miller M.L."/>
            <person name="Jensen L.J."/>
            <person name="Gnad F."/>
            <person name="Cox J."/>
            <person name="Jensen T.S."/>
            <person name="Nigg E.A."/>
            <person name="Brunak S."/>
            <person name="Mann M."/>
        </authorList>
    </citation>
    <scope>PHOSPHORYLATION [LARGE SCALE ANALYSIS] AT THR-1844; SER-1874 AND SER-1881</scope>
    <scope>IDENTIFICATION BY MASS SPECTROMETRY [LARGE SCALE ANALYSIS]</scope>
    <source>
        <tissue>Cervix carcinoma</tissue>
    </source>
</reference>
<reference key="13">
    <citation type="journal article" date="2011" name="BMC Syst. Biol.">
        <title>Initial characterization of the human central proteome.</title>
        <authorList>
            <person name="Burkard T.R."/>
            <person name="Planyavsky M."/>
            <person name="Kaupe I."/>
            <person name="Breitwieser F.P."/>
            <person name="Buerckstuemmer T."/>
            <person name="Bennett K.L."/>
            <person name="Superti-Furga G."/>
            <person name="Colinge J."/>
        </authorList>
    </citation>
    <scope>IDENTIFICATION BY MASS SPECTROMETRY [LARGE SCALE ANALYSIS]</scope>
</reference>
<reference key="14">
    <citation type="journal article" date="2011" name="Sci. Signal.">
        <title>System-wide temporal characterization of the proteome and phosphoproteome of human embryonic stem cell differentiation.</title>
        <authorList>
            <person name="Rigbolt K.T."/>
            <person name="Prokhorova T.A."/>
            <person name="Akimov V."/>
            <person name="Henningsen J."/>
            <person name="Johansen P.T."/>
            <person name="Kratchmarova I."/>
            <person name="Kassem M."/>
            <person name="Mann M."/>
            <person name="Olsen J.V."/>
            <person name="Blagoev B."/>
        </authorList>
    </citation>
    <scope>PHOSPHORYLATION [LARGE SCALE ANALYSIS] AT THR-1844</scope>
    <scope>IDENTIFICATION BY MASS SPECTROMETRY [LARGE SCALE ANALYSIS]</scope>
</reference>
<reference key="15">
    <citation type="journal article" date="2013" name="J. Proteome Res.">
        <title>Toward a comprehensive characterization of a human cancer cell phosphoproteome.</title>
        <authorList>
            <person name="Zhou H."/>
            <person name="Di Palma S."/>
            <person name="Preisinger C."/>
            <person name="Peng M."/>
            <person name="Polat A.N."/>
            <person name="Heck A.J."/>
            <person name="Mohammed S."/>
        </authorList>
    </citation>
    <scope>PHOSPHORYLATION [LARGE SCALE ANALYSIS] AT THR-1844; SER-1874; SER-1877 AND SER-1881</scope>
    <scope>IDENTIFICATION BY MASS SPECTROMETRY [LARGE SCALE ANALYSIS]</scope>
    <source>
        <tissue>Cervix carcinoma</tissue>
        <tissue>Erythroleukemia</tissue>
    </source>
</reference>
<reference key="16">
    <citation type="journal article" date="2014" name="J. Proteomics">
        <title>An enzyme assisted RP-RPLC approach for in-depth analysis of human liver phosphoproteome.</title>
        <authorList>
            <person name="Bian Y."/>
            <person name="Song C."/>
            <person name="Cheng K."/>
            <person name="Dong M."/>
            <person name="Wang F."/>
            <person name="Huang J."/>
            <person name="Sun D."/>
            <person name="Wang L."/>
            <person name="Ye M."/>
            <person name="Zou H."/>
        </authorList>
    </citation>
    <scope>PHOSPHORYLATION [LARGE SCALE ANALYSIS] AT THR-1844</scope>
    <scope>IDENTIFICATION BY MASS SPECTROMETRY [LARGE SCALE ANALYSIS]</scope>
    <source>
        <tissue>Liver</tissue>
    </source>
</reference>
<reference key="17">
    <citation type="journal article" date="2015" name="Proteomics">
        <title>N-terminome analysis of the human mitochondrial proteome.</title>
        <authorList>
            <person name="Vaca Jacome A.S."/>
            <person name="Rabilloud T."/>
            <person name="Schaeffer-Reiss C."/>
            <person name="Rompais M."/>
            <person name="Ayoub D."/>
            <person name="Lane L."/>
            <person name="Bairoch A."/>
            <person name="Van Dorsselaer A."/>
            <person name="Carapito C."/>
        </authorList>
    </citation>
    <scope>IDENTIFICATION BY MASS SPECTROMETRY [LARGE SCALE ANALYSIS]</scope>
</reference>
<reference key="18">
    <citation type="journal article" date="2007" name="J. Proteome Res.">
        <title>Detection and validation of non-synonymous coding SNPs from orthogonal analysis of shotgun proteomics data.</title>
        <authorList>
            <person name="Bunger M.K."/>
            <person name="Cargile B.J."/>
            <person name="Sevinsky J.R."/>
            <person name="Deyanova E."/>
            <person name="Yates N.A."/>
            <person name="Hendrickson R.C."/>
            <person name="Stephenson J.L. Jr."/>
        </authorList>
    </citation>
    <scope>VARIANT LEU-786</scope>
    <scope>IDENTIFICATION BY MASS SPECTROMETRY</scope>
</reference>
<dbReference type="EMBL" id="AC027124">
    <property type="status" value="NOT_ANNOTATED_CDS"/>
    <property type="molecule type" value="Genomic_DNA"/>
</dbReference>
<dbReference type="EMBL" id="AC069246">
    <property type="status" value="NOT_ANNOTATED_CDS"/>
    <property type="molecule type" value="Genomic_DNA"/>
</dbReference>
<dbReference type="EMBL" id="BC067089">
    <property type="protein sequence ID" value="AAH67089.1"/>
    <property type="molecule type" value="mRNA"/>
</dbReference>
<dbReference type="EMBL" id="AK026042">
    <property type="protein sequence ID" value="BAB15332.1"/>
    <property type="status" value="ALT_INIT"/>
    <property type="molecule type" value="mRNA"/>
</dbReference>
<dbReference type="EMBL" id="AK074101">
    <property type="protein sequence ID" value="BAB84927.1"/>
    <property type="molecule type" value="mRNA"/>
</dbReference>
<dbReference type="EMBL" id="AB020713">
    <property type="protein sequence ID" value="BAA74929.1"/>
    <property type="molecule type" value="mRNA"/>
</dbReference>
<dbReference type="EMBL" id="AK075545">
    <property type="protein sequence ID" value="BAC11688.1"/>
    <property type="status" value="ALT_INIT"/>
    <property type="molecule type" value="mRNA"/>
</dbReference>
<dbReference type="EMBL" id="AL117527">
    <property type="protein sequence ID" value="CAB55979.2"/>
    <property type="molecule type" value="mRNA"/>
</dbReference>
<dbReference type="CCDS" id="CCDS33704.1">
    <molecule id="Q8TEM1-1"/>
</dbReference>
<dbReference type="PIR" id="T17289">
    <property type="entry name" value="T17289"/>
</dbReference>
<dbReference type="RefSeq" id="NP_079199.2">
    <molecule id="Q8TEM1-1"/>
    <property type="nucleotide sequence ID" value="NM_024923.3"/>
</dbReference>
<dbReference type="PDB" id="7R5J">
    <property type="method" value="EM"/>
    <property type="resolution" value="50.00 A"/>
    <property type="chains" value="10/11/12/13/14/15/16/17=1-1887"/>
</dbReference>
<dbReference type="PDB" id="7R5K">
    <property type="method" value="EM"/>
    <property type="resolution" value="12.00 A"/>
    <property type="chains" value="10/11/12/13/14/15/16/17=1-1887"/>
</dbReference>
<dbReference type="PDBsum" id="7R5J"/>
<dbReference type="PDBsum" id="7R5K"/>
<dbReference type="EMDB" id="EMD-14321"/>
<dbReference type="EMDB" id="EMD-14322"/>
<dbReference type="SMR" id="Q8TEM1"/>
<dbReference type="BioGRID" id="116831">
    <property type="interactions" value="193"/>
</dbReference>
<dbReference type="ComplexPortal" id="CPX-873">
    <property type="entry name" value="Nuclear pore complex"/>
</dbReference>
<dbReference type="CORUM" id="Q8TEM1"/>
<dbReference type="FunCoup" id="Q8TEM1">
    <property type="interactions" value="2169"/>
</dbReference>
<dbReference type="IntAct" id="Q8TEM1">
    <property type="interactions" value="85"/>
</dbReference>
<dbReference type="MINT" id="Q8TEM1"/>
<dbReference type="STRING" id="9606.ENSP00000254508"/>
<dbReference type="TCDB" id="1.I.1.1.3">
    <property type="family name" value="the nuclear pore complex (npc) family"/>
</dbReference>
<dbReference type="GlyConnect" id="1579">
    <property type="glycosylation" value="8 N-Linked glycans (5 sites)"/>
</dbReference>
<dbReference type="GlyCosmos" id="Q8TEM1">
    <property type="glycosylation" value="12 sites, 7 glycans"/>
</dbReference>
<dbReference type="GlyGen" id="Q8TEM1">
    <property type="glycosylation" value="19 sites, 22 N-linked glycans (10 sites), 1 O-linked glycan (5 sites)"/>
</dbReference>
<dbReference type="iPTMnet" id="Q8TEM1"/>
<dbReference type="PhosphoSitePlus" id="Q8TEM1"/>
<dbReference type="SwissPalm" id="Q8TEM1"/>
<dbReference type="BioMuta" id="NUP210"/>
<dbReference type="DMDM" id="116242720"/>
<dbReference type="jPOST" id="Q8TEM1"/>
<dbReference type="MassIVE" id="Q8TEM1"/>
<dbReference type="PaxDb" id="9606-ENSP00000254508"/>
<dbReference type="PeptideAtlas" id="Q8TEM1"/>
<dbReference type="ProteomicsDB" id="74472">
    <molecule id="Q8TEM1-1"/>
</dbReference>
<dbReference type="ProteomicsDB" id="74473">
    <molecule id="Q8TEM1-2"/>
</dbReference>
<dbReference type="Pumba" id="Q8TEM1"/>
<dbReference type="Antibodypedia" id="10858">
    <property type="antibodies" value="210 antibodies from 27 providers"/>
</dbReference>
<dbReference type="DNASU" id="23225"/>
<dbReference type="Ensembl" id="ENST00000254508.7">
    <molecule id="Q8TEM1-1"/>
    <property type="protein sequence ID" value="ENSP00000254508.5"/>
    <property type="gene ID" value="ENSG00000132182.13"/>
</dbReference>
<dbReference type="GeneID" id="23225"/>
<dbReference type="KEGG" id="hsa:23225"/>
<dbReference type="MANE-Select" id="ENST00000254508.7">
    <property type="protein sequence ID" value="ENSP00000254508.5"/>
    <property type="RefSeq nucleotide sequence ID" value="NM_024923.4"/>
    <property type="RefSeq protein sequence ID" value="NP_079199.2"/>
</dbReference>
<dbReference type="UCSC" id="uc003bxv.3">
    <molecule id="Q8TEM1-1"/>
    <property type="organism name" value="human"/>
</dbReference>
<dbReference type="AGR" id="HGNC:30052"/>
<dbReference type="CTD" id="23225"/>
<dbReference type="DisGeNET" id="23225"/>
<dbReference type="GeneCards" id="NUP210"/>
<dbReference type="HGNC" id="HGNC:30052">
    <property type="gene designation" value="NUP210"/>
</dbReference>
<dbReference type="HPA" id="ENSG00000132182">
    <property type="expression patterns" value="Tissue enhanced (bone marrow, lymphoid tissue)"/>
</dbReference>
<dbReference type="MIM" id="607703">
    <property type="type" value="gene"/>
</dbReference>
<dbReference type="neXtProt" id="NX_Q8TEM1"/>
<dbReference type="OpenTargets" id="ENSG00000132182"/>
<dbReference type="PharmGKB" id="PA128394614"/>
<dbReference type="VEuPathDB" id="HostDB:ENSG00000132182"/>
<dbReference type="eggNOG" id="KOG1833">
    <property type="taxonomic scope" value="Eukaryota"/>
</dbReference>
<dbReference type="GeneTree" id="ENSGT00390000009491"/>
<dbReference type="HOGENOM" id="CLU_001205_1_1_1"/>
<dbReference type="InParanoid" id="Q8TEM1"/>
<dbReference type="OMA" id="HNMYEGT"/>
<dbReference type="OrthoDB" id="361283at2759"/>
<dbReference type="PAN-GO" id="Q8TEM1">
    <property type="GO annotations" value="1 GO annotation based on evolutionary models"/>
</dbReference>
<dbReference type="PhylomeDB" id="Q8TEM1"/>
<dbReference type="TreeFam" id="TF313331"/>
<dbReference type="PathwayCommons" id="Q8TEM1"/>
<dbReference type="Reactome" id="R-HSA-1169408">
    <property type="pathway name" value="ISG15 antiviral mechanism"/>
</dbReference>
<dbReference type="Reactome" id="R-HSA-159227">
    <property type="pathway name" value="Transport of the SLBP independent Mature mRNA"/>
</dbReference>
<dbReference type="Reactome" id="R-HSA-159230">
    <property type="pathway name" value="Transport of the SLBP Dependant Mature mRNA"/>
</dbReference>
<dbReference type="Reactome" id="R-HSA-159231">
    <property type="pathway name" value="Transport of Mature mRNA Derived from an Intronless Transcript"/>
</dbReference>
<dbReference type="Reactome" id="R-HSA-159236">
    <property type="pathway name" value="Transport of Mature mRNA derived from an Intron-Containing Transcript"/>
</dbReference>
<dbReference type="Reactome" id="R-HSA-165054">
    <property type="pathway name" value="Rev-mediated nuclear export of HIV RNA"/>
</dbReference>
<dbReference type="Reactome" id="R-HSA-168271">
    <property type="pathway name" value="Transport of Ribonucleoproteins into the Host Nucleus"/>
</dbReference>
<dbReference type="Reactome" id="R-HSA-168276">
    <property type="pathway name" value="NS1 Mediated Effects on Host Pathways"/>
</dbReference>
<dbReference type="Reactome" id="R-HSA-168325">
    <property type="pathway name" value="Viral Messenger RNA Synthesis"/>
</dbReference>
<dbReference type="Reactome" id="R-HSA-168333">
    <property type="pathway name" value="NEP/NS2 Interacts with the Cellular Export Machinery"/>
</dbReference>
<dbReference type="Reactome" id="R-HSA-170822">
    <property type="pathway name" value="Regulation of Glucokinase by Glucokinase Regulatory Protein"/>
</dbReference>
<dbReference type="Reactome" id="R-HSA-180746">
    <property type="pathway name" value="Nuclear import of Rev protein"/>
</dbReference>
<dbReference type="Reactome" id="R-HSA-180910">
    <property type="pathway name" value="Vpr-mediated nuclear import of PICs"/>
</dbReference>
<dbReference type="Reactome" id="R-HSA-191859">
    <property type="pathway name" value="snRNP Assembly"/>
</dbReference>
<dbReference type="Reactome" id="R-HSA-3108214">
    <property type="pathway name" value="SUMOylation of DNA damage response and repair proteins"/>
</dbReference>
<dbReference type="Reactome" id="R-HSA-3232142">
    <property type="pathway name" value="SUMOylation of ubiquitinylation proteins"/>
</dbReference>
<dbReference type="Reactome" id="R-HSA-3301854">
    <property type="pathway name" value="Nuclear Pore Complex (NPC) Disassembly"/>
</dbReference>
<dbReference type="Reactome" id="R-HSA-3371453">
    <property type="pathway name" value="Regulation of HSF1-mediated heat shock response"/>
</dbReference>
<dbReference type="Reactome" id="R-HSA-4085377">
    <property type="pathway name" value="SUMOylation of SUMOylation proteins"/>
</dbReference>
<dbReference type="Reactome" id="R-HSA-4551638">
    <property type="pathway name" value="SUMOylation of chromatin organization proteins"/>
</dbReference>
<dbReference type="Reactome" id="R-HSA-4570464">
    <property type="pathway name" value="SUMOylation of RNA binding proteins"/>
</dbReference>
<dbReference type="Reactome" id="R-HSA-4615885">
    <property type="pathway name" value="SUMOylation of DNA replication proteins"/>
</dbReference>
<dbReference type="Reactome" id="R-HSA-5578749">
    <property type="pathway name" value="Transcriptional regulation by small RNAs"/>
</dbReference>
<dbReference type="Reactome" id="R-HSA-5619107">
    <property type="pathway name" value="Defective TPR may confer susceptibility towards thyroid papillary carcinoma (TPC)"/>
</dbReference>
<dbReference type="Reactome" id="R-HSA-6784531">
    <property type="pathway name" value="tRNA processing in the nucleus"/>
</dbReference>
<dbReference type="Reactome" id="R-HSA-9609690">
    <property type="pathway name" value="HCMV Early Events"/>
</dbReference>
<dbReference type="Reactome" id="R-HSA-9610379">
    <property type="pathway name" value="HCMV Late Events"/>
</dbReference>
<dbReference type="Reactome" id="R-HSA-9705671">
    <property type="pathway name" value="SARS-CoV-2 activates/modulates innate and adaptive immune responses"/>
</dbReference>
<dbReference type="SignaLink" id="Q8TEM1"/>
<dbReference type="SIGNOR" id="Q8TEM1"/>
<dbReference type="BioGRID-ORCS" id="23225">
    <property type="hits" value="21 hits in 1168 CRISPR screens"/>
</dbReference>
<dbReference type="CD-CODE" id="91857CE7">
    <property type="entry name" value="Nucleolus"/>
</dbReference>
<dbReference type="ChiTaRS" id="NUP210">
    <property type="organism name" value="human"/>
</dbReference>
<dbReference type="GenomeRNAi" id="23225"/>
<dbReference type="Pharos" id="Q8TEM1">
    <property type="development level" value="Tbio"/>
</dbReference>
<dbReference type="PRO" id="PR:Q8TEM1"/>
<dbReference type="Proteomes" id="UP000005640">
    <property type="component" value="Chromosome 3"/>
</dbReference>
<dbReference type="RNAct" id="Q8TEM1">
    <property type="molecule type" value="protein"/>
</dbReference>
<dbReference type="Bgee" id="ENSG00000132182">
    <property type="expression patterns" value="Expressed in endometrium epithelium and 162 other cell types or tissues"/>
</dbReference>
<dbReference type="GO" id="GO:0005789">
    <property type="term" value="C:endoplasmic reticulum membrane"/>
    <property type="evidence" value="ECO:0007669"/>
    <property type="project" value="UniProtKB-SubCell"/>
</dbReference>
<dbReference type="GO" id="GO:0016020">
    <property type="term" value="C:membrane"/>
    <property type="evidence" value="ECO:0007005"/>
    <property type="project" value="UniProtKB"/>
</dbReference>
<dbReference type="GO" id="GO:0005635">
    <property type="term" value="C:nuclear envelope"/>
    <property type="evidence" value="ECO:0000314"/>
    <property type="project" value="ComplexPortal"/>
</dbReference>
<dbReference type="GO" id="GO:0031965">
    <property type="term" value="C:nuclear membrane"/>
    <property type="evidence" value="ECO:0007669"/>
    <property type="project" value="UniProtKB-SubCell"/>
</dbReference>
<dbReference type="GO" id="GO:0005643">
    <property type="term" value="C:nuclear pore"/>
    <property type="evidence" value="ECO:0000318"/>
    <property type="project" value="GO_Central"/>
</dbReference>
<dbReference type="GO" id="GO:0051028">
    <property type="term" value="P:mRNA transport"/>
    <property type="evidence" value="ECO:0007669"/>
    <property type="project" value="UniProtKB-KW"/>
</dbReference>
<dbReference type="GO" id="GO:0006913">
    <property type="term" value="P:nucleocytoplasmic transport"/>
    <property type="evidence" value="ECO:0000303"/>
    <property type="project" value="ComplexPortal"/>
</dbReference>
<dbReference type="GO" id="GO:0015031">
    <property type="term" value="P:protein transport"/>
    <property type="evidence" value="ECO:0007669"/>
    <property type="project" value="UniProtKB-KW"/>
</dbReference>
<dbReference type="InterPro" id="IPR003343">
    <property type="entry name" value="Big_2"/>
</dbReference>
<dbReference type="InterPro" id="IPR056897">
    <property type="entry name" value="Ig_NUP210_4th"/>
</dbReference>
<dbReference type="InterPro" id="IPR056898">
    <property type="entry name" value="Ig_NUP210_6th"/>
</dbReference>
<dbReference type="InterPro" id="IPR056899">
    <property type="entry name" value="Ig_NUP210_9th"/>
</dbReference>
<dbReference type="InterPro" id="IPR008964">
    <property type="entry name" value="Invasin/intimin_cell_adhesion"/>
</dbReference>
<dbReference type="InterPro" id="IPR045197">
    <property type="entry name" value="NUP210-like"/>
</dbReference>
<dbReference type="InterPro" id="IPR055096">
    <property type="entry name" value="NUP210_Ig1"/>
</dbReference>
<dbReference type="InterPro" id="IPR055094">
    <property type="entry name" value="NUP210_Ig15"/>
</dbReference>
<dbReference type="InterPro" id="IPR055097">
    <property type="entry name" value="NUP210_Ig2"/>
</dbReference>
<dbReference type="InterPro" id="IPR055098">
    <property type="entry name" value="NUP210_Ig3"/>
</dbReference>
<dbReference type="InterPro" id="IPR055099">
    <property type="entry name" value="NUP210_Ig7"/>
</dbReference>
<dbReference type="InterPro" id="IPR055095">
    <property type="entry name" value="NUP210_Ig_C"/>
</dbReference>
<dbReference type="PANTHER" id="PTHR23019:SF2">
    <property type="entry name" value="NUCLEAR PORE MEMBRANE GLYCOPROTEIN 210"/>
    <property type="match status" value="1"/>
</dbReference>
<dbReference type="PANTHER" id="PTHR23019">
    <property type="entry name" value="NUCLEAR PORE MEMBRANE GLYCOPROTEIN GP210-RELATED"/>
    <property type="match status" value="1"/>
</dbReference>
<dbReference type="Pfam" id="PF02368">
    <property type="entry name" value="Big_2"/>
    <property type="match status" value="1"/>
</dbReference>
<dbReference type="Pfam" id="PF22959">
    <property type="entry name" value="Ig_NUP210_15th"/>
    <property type="match status" value="1"/>
</dbReference>
<dbReference type="Pfam" id="PF25354">
    <property type="entry name" value="Ig_NUP210_16th"/>
    <property type="match status" value="1"/>
</dbReference>
<dbReference type="Pfam" id="PF22967">
    <property type="entry name" value="Ig_NUP210_1st"/>
    <property type="match status" value="1"/>
</dbReference>
<dbReference type="Pfam" id="PF22969">
    <property type="entry name" value="Ig_NUP210_2nd"/>
    <property type="match status" value="1"/>
</dbReference>
<dbReference type="Pfam" id="PF22963">
    <property type="entry name" value="Ig_NUP210_3rd"/>
    <property type="match status" value="1"/>
</dbReference>
<dbReference type="Pfam" id="PF24991">
    <property type="entry name" value="Ig_NUP210_4th"/>
    <property type="match status" value="1"/>
</dbReference>
<dbReference type="Pfam" id="PF24935">
    <property type="entry name" value="Ig_NUP210_6th"/>
    <property type="match status" value="1"/>
</dbReference>
<dbReference type="Pfam" id="PF22962">
    <property type="entry name" value="Ig_NUP210_7th"/>
    <property type="match status" value="1"/>
</dbReference>
<dbReference type="Pfam" id="PF24902">
    <property type="entry name" value="Ig_NUP210_9th"/>
    <property type="match status" value="1"/>
</dbReference>
<dbReference type="Pfam" id="PF22957">
    <property type="entry name" value="NUP210_Ig"/>
    <property type="match status" value="1"/>
</dbReference>
<dbReference type="SMART" id="SM00635">
    <property type="entry name" value="BID_2"/>
    <property type="match status" value="1"/>
</dbReference>
<dbReference type="SUPFAM" id="SSF49373">
    <property type="entry name" value="Invasin/intimin cell-adhesion fragments"/>
    <property type="match status" value="1"/>
</dbReference>
<gene>
    <name type="primary">NUP210</name>
    <name type="synonym">KIAA0906</name>
    <name type="ORF">PSEC0245</name>
</gene>
<name>PO210_HUMAN</name>
<organism>
    <name type="scientific">Homo sapiens</name>
    <name type="common">Human</name>
    <dbReference type="NCBI Taxonomy" id="9606"/>
    <lineage>
        <taxon>Eukaryota</taxon>
        <taxon>Metazoa</taxon>
        <taxon>Chordata</taxon>
        <taxon>Craniata</taxon>
        <taxon>Vertebrata</taxon>
        <taxon>Euteleostomi</taxon>
        <taxon>Mammalia</taxon>
        <taxon>Eutheria</taxon>
        <taxon>Euarchontoglires</taxon>
        <taxon>Primates</taxon>
        <taxon>Haplorrhini</taxon>
        <taxon>Catarrhini</taxon>
        <taxon>Hominidae</taxon>
        <taxon>Homo</taxon>
    </lineage>
</organism>
<sequence length="1887" mass="205111">MAARGRGLLLLTLSVLLAAGPSAAAAKLNIPKVLLPFTRATRVNFTLEASEGCYRWLSTRPEVASIEPLGLDEQQCSQKAVVQARLTQPARLTSIIFAEDITTGQVLRCDAIVDLIHDIQIVSTTRELYLEDSPLELKIQALDSEGNTFSTLAGLVFEWTIVKDSEADRFSDSHNALRILTFLESTYIPPSYISEMEKAAKQGDTILVSGMKTGSSKLKARIQEAVYKNVRPAEVRLLILENILLNPAYDVYLMVGTSIHYKVQKIRQGKITELSMPSDQYELQLQNSIPGPEGDPARPVAVLAQDTSMVTALQLGQSSLVLGHRSIRMQGASRLPNSTIYVVEPGYLGFTVHPGDRWVLETGRLYEITIEVFDKFSNKVYVSDNIRIETVLPAEFFEVLSSSQNGSYHRIRALKRGQTAIDAALTSVVDQDGGVHILQVPVWNQQEVEIHIPITLYPSILTFPWQPKTGAYQYTIRAHGGSGNFSWSSSSHLVATVTVKGVMTTGSDIGFSVIQAHDVQNPLHFGEMKVYVIEPHSMEFAPCQVEARVGQALELPLRISGLMPGGASEVVTLSDCSHFDLAVEVENQGVFQPLPGRLPPGSEHCSGIRVKAEAQGSTTLLVSYRHGHVHLSAKITIAAYLPLKAVDPSSVALVTLGSSKEMLFEGGPRPWILEPSKFFQNVTAEDTDSIGLALFAPHSSRNYQQHWILVTCQALGEQVIALSVGNKPSLTNPFPAVEPAVVKFVCAPPSRLTLAPVYTSPQLDMSCPLLQQNKQVVPVSSHRNPRLDLAAYDQEGRRFDNFSSLSIQWESTRPVLASIEPELPMQLVSQDDESGQKKLHGLQAILVHEASGTTAITATATGYQESHLSSARTKQPHDPLVPLSASIELILVEDVRVSPEEVTIYNHPGIQAELRIREGSGYFFLNTSTADVVKVAYQEARGVAMVHPLLPGSSTIMIHDLCLVFPAPAKAVVYVSDIQELYIRVVDKVEIGKTVKAYVRVLDLHKKPFLAKYFPFMDLKLRAASPIITLVALDEALDNYTITFLIRGVAIGQTSLTASVTNKAGQRINSAPQQIEVFPPFRLMPRKVTLLIGATMQVTSEGGPQPQSNILFSISNESVALVSAAGLVQGLAIGNGTVSGLVQAVDAETGKVVIISQDLVQVEVLLLRAVRIRAPIMRMRTGTQMPIYVTGITNHQNPFSFGNAVPGLTFHWSVTKRDVLDLRGRHHEASIRLPSQYNFAMNVLGRVKGRTGLRVVVKAVDPTSGQLYGLARELSDEIQVQVFEKLQLLNPEIEAEQILMSPNSYIKLQTNRDGAASLSYRVLDGPEKVPVVHVDEKGFLASGSMIGTSTIEVIAQEPFGANQTIIVAVKVSPVSYLRVSMSPVLHTQNKEALVAVPLGMTVTFTVHFHDNSGDVFHAHSSVLNFATNRDDFVQIGKGPTNNTCVVRTVSVGLTLLRVWDAEHPGLSDFMPLPVLQAISPELSGAMVVGDVLCLATVLTSLEGLSGTWSSSANSILHIDPKTGVAVARAVGSVTVYYEVAGHLRTYKEVVVSVPQRIMARHLHPIQTSFQEATASKVIVAVGDRSSNLRGECTPTQREVIQALHPETLISCQSQFKPAVFDFPSQDVFTVEPQFDTALGQYFCSITMHRLTDKQRKHLSMKKTALVVSASLSSSHFSTEQVGAEVPFSPGLFADQAEILLSNHYTSSEIRVFGAPEVLENLEVKSGSPAVLAFAKEKSFGWPSFITYTVGVLDPAAGSQGPLSTTLTFSSPVTNQAIAIPVTVAFVVDRRGPGPYGASLFQHFLDSYQVMFFTLFALLAGTAVMIIAYHTVCTPRDLAVPAALTPRASPGHSPHYFAASSPTSPNALPPARKASPPSGLWSPAYASH</sequence>
<evidence type="ECO:0000250" key="1"/>
<evidence type="ECO:0000255" key="2"/>
<evidence type="ECO:0000256" key="3">
    <source>
        <dbReference type="SAM" id="MobiDB-lite"/>
    </source>
</evidence>
<evidence type="ECO:0000269" key="4">
    <source>
    </source>
</evidence>
<evidence type="ECO:0000269" key="5">
    <source>
    </source>
</evidence>
<evidence type="ECO:0000269" key="6">
    <source>
    </source>
</evidence>
<evidence type="ECO:0000269" key="7">
    <source>
    </source>
</evidence>
<evidence type="ECO:0000269" key="8">
    <source>
    </source>
</evidence>
<evidence type="ECO:0000269" key="9">
    <source>
    </source>
</evidence>
<evidence type="ECO:0000269" key="10">
    <source>
    </source>
</evidence>
<evidence type="ECO:0000269" key="11">
    <source>
    </source>
</evidence>
<evidence type="ECO:0000303" key="12">
    <source>
    </source>
</evidence>
<evidence type="ECO:0000303" key="13">
    <source>
    </source>
</evidence>
<evidence type="ECO:0000305" key="14"/>
<evidence type="ECO:0007744" key="15">
    <source>
    </source>
</evidence>
<evidence type="ECO:0007744" key="16">
    <source>
    </source>
</evidence>
<evidence type="ECO:0007744" key="17">
    <source>
    </source>
</evidence>
<evidence type="ECO:0007744" key="18">
    <source>
    </source>
</evidence>
<evidence type="ECO:0007744" key="19">
    <source>
    </source>
</evidence>
<evidence type="ECO:0007744" key="20">
    <source>
    </source>
</evidence>
<proteinExistence type="evidence at protein level"/>
<comment type="function">
    <text evidence="5">Nucleoporin essential for nuclear pore assembly and fusion, nuclear pore spacing, as well as structural integrity.</text>
</comment>
<comment type="subunit">
    <text evidence="1">Forms dimers and possibly higher-order oligomers.</text>
</comment>
<comment type="interaction">
    <interactant intactId="EBI-372826">
        <id>Q8TEM1</id>
    </interactant>
    <interactant intactId="EBI-529989">
        <id>Q9NRI5</id>
        <label>DISC1</label>
    </interactant>
    <organismsDiffer>false</organismsDiffer>
    <experiments>2</experiments>
</comment>
<comment type="interaction">
    <interactant intactId="EBI-372826">
        <id>Q8TEM1</id>
    </interactant>
    <interactant intactId="EBI-5655962">
        <id>Q9UK39</id>
        <label>NOCT</label>
    </interactant>
    <organismsDiffer>false</organismsDiffer>
    <experiments>2</experiments>
</comment>
<comment type="subcellular location">
    <subcellularLocation>
        <location evidence="11">Nucleus</location>
        <location evidence="11">Nuclear pore complex</location>
    </subcellularLocation>
    <subcellularLocation>
        <location evidence="11">Nucleus membrane</location>
        <topology evidence="11">Single-pass type I membrane protein</topology>
    </subcellularLocation>
    <subcellularLocation>
        <location evidence="11">Endoplasmic reticulum membrane</location>
        <topology evidence="11">Single-pass type I membrane protein</topology>
    </subcellularLocation>
</comment>
<comment type="alternative products">
    <event type="alternative splicing"/>
    <isoform>
        <id>Q8TEM1-1</id>
        <name>1</name>
        <sequence type="displayed"/>
    </isoform>
    <isoform>
        <id>Q8TEM1-2</id>
        <name>2</name>
        <sequence type="described" ref="VSP_018567 VSP_018568"/>
    </isoform>
</comment>
<comment type="tissue specificity">
    <text evidence="4">Ubiquitous expression, with highest levels in lung, liver, pancreas, testis, and ovary, intermediate levels in brain, kidney, and spleen, and lowest levels in heart and skeletal muscle.</text>
</comment>
<comment type="PTM">
    <text evidence="1">N-glycosylated, but not all potential glycosylation sites may be used. Contains high-mannose type oligosaccharides (By similarity).</text>
</comment>
<comment type="PTM">
    <text evidence="1">Phosphorylated at Ser-1881 in mitosis specifically; not phosphorylated in interphase.</text>
</comment>
<comment type="miscellaneous">
    <text>Recognized by antinuclear autoantibodies in primary biliary cirrhosis.</text>
</comment>
<comment type="miscellaneous">
    <text>Knockdown of NUP210 causes nuclear membranes to accumulate aberrant structures termed twinned and fusion-arrested membranes and nuclear pore complex to cluster. Induces cell death and chromatin disruptions.</text>
</comment>
<comment type="similarity">
    <text evidence="14">Belongs to the NUP210 family.</text>
</comment>
<comment type="sequence caution" evidence="14">
    <conflict type="erroneous initiation">
        <sequence resource="EMBL-CDS" id="BAB15332"/>
    </conflict>
</comment>
<comment type="sequence caution" evidence="14">
    <conflict type="erroneous initiation">
        <sequence resource="EMBL-CDS" id="BAC11688"/>
    </conflict>
</comment>